<protein>
    <recommendedName>
        <fullName evidence="1">Isoleucine--tRNA ligase</fullName>
        <ecNumber evidence="1">6.1.1.5</ecNumber>
    </recommendedName>
    <alternativeName>
        <fullName evidence="1">Isoleucyl-tRNA synthetase</fullName>
        <shortName evidence="1">IleRS</shortName>
    </alternativeName>
</protein>
<proteinExistence type="inferred from homology"/>
<sequence>MTDPKSYKDTVNLPKTNFSMRANAVKREPELQKFWADNQIYEKLSQENPEEVFVLHDGPPYANGSLHMGHALNKTLKDIINKYKLLRGYKVRYVPGWDCHGLPIELKVLQSMKSKEREGLTPLKLRHKARDFALKTQEEQAKGFKRFGVWGDWENPYLTLTPEYEAAQIGVFGEMALKGYIYRGLKPVHWSPSSQTALAEAELEYPEGHTSRSIFAAFPIIKASKDTEEILQPFLNKLGVAIWTTTPWTLPGNLAVALNPDLNYAVVEQNSDVCNYQYLIVAADLVERLSTTFETELTVKATLPGKALEHTIYRHPLYDRESEILIGGDYVTTESGTGLVHTAPGHGQEDYMVGQRYGLGILSPVDAKGNFTEEARQFAGLNVLKDANEVIINELKEKGSLLKEEAYQHKYPYDWRTKKPTIFRATEQWFASVKGFRDAALTAIKTVQWIPAQGENRITPMVSDRSDWCISRQRSWGLPIPVFYDEETNEPLLTEETIKHIQTIFAEKGSDAWWEMSIEALLPDQYKADAHKYRKGTDTMDVWFDSGSSWASVAKQRPELKYPADIYLEGSDQHRGWFQSSLLTSVAVNEIAPYKTVLTHGFVLDEKGHKMSKSLGNIVDPNVIINGGKNQKQEPPYGADVLRLWVSSVDYSSDVPIGKTILKQLSDIYRKIRNTARFLLGNLHDFDPKKDTVSYEELPELDRYMLHRITEVFTEVTDAFETYQFFRFFQTVQNFCVVDLSNFYLDIAKDRLYISHPESIRRRSCQTVLAIAIENLAKAIAPVLCHMAEDIWQFLPYETPYKSVFTAGWVKTSKQWENSELSASWAKIRGIRNEVNNALELARKEKAIGSSLDAKVLLYVPEQNLRQQLEKFNPADSLTGNHVDELRYFVLASQVELVDSLDSIKNADYHSESDLVSVGVIKAEGEKCDRCWNYSTKVGEFKDDPTICERCNAALVGDF</sequence>
<organism>
    <name type="scientific">Crocosphaera subtropica (strain ATCC 51142 / BH68)</name>
    <name type="common">Cyanothece sp. (strain ATCC 51142)</name>
    <dbReference type="NCBI Taxonomy" id="43989"/>
    <lineage>
        <taxon>Bacteria</taxon>
        <taxon>Bacillati</taxon>
        <taxon>Cyanobacteriota</taxon>
        <taxon>Cyanophyceae</taxon>
        <taxon>Oscillatoriophycideae</taxon>
        <taxon>Chroococcales</taxon>
        <taxon>Aphanothecaceae</taxon>
        <taxon>Crocosphaera</taxon>
        <taxon>Crocosphaera subtropica</taxon>
    </lineage>
</organism>
<dbReference type="EC" id="6.1.1.5" evidence="1"/>
<dbReference type="EMBL" id="CP000806">
    <property type="protein sequence ID" value="ACB53893.1"/>
    <property type="molecule type" value="Genomic_DNA"/>
</dbReference>
<dbReference type="RefSeq" id="WP_012362482.1">
    <property type="nucleotide sequence ID" value="NC_010546.1"/>
</dbReference>
<dbReference type="SMR" id="B1WVA3"/>
<dbReference type="STRING" id="43989.cce_4545"/>
<dbReference type="KEGG" id="cyt:cce_4545"/>
<dbReference type="eggNOG" id="COG0060">
    <property type="taxonomic scope" value="Bacteria"/>
</dbReference>
<dbReference type="HOGENOM" id="CLU_001493_7_0_3"/>
<dbReference type="OrthoDB" id="9810365at2"/>
<dbReference type="Proteomes" id="UP000001203">
    <property type="component" value="Chromosome circular"/>
</dbReference>
<dbReference type="GO" id="GO:0005737">
    <property type="term" value="C:cytoplasm"/>
    <property type="evidence" value="ECO:0007669"/>
    <property type="project" value="UniProtKB-SubCell"/>
</dbReference>
<dbReference type="GO" id="GO:0002161">
    <property type="term" value="F:aminoacyl-tRNA deacylase activity"/>
    <property type="evidence" value="ECO:0007669"/>
    <property type="project" value="InterPro"/>
</dbReference>
<dbReference type="GO" id="GO:0005524">
    <property type="term" value="F:ATP binding"/>
    <property type="evidence" value="ECO:0007669"/>
    <property type="project" value="UniProtKB-UniRule"/>
</dbReference>
<dbReference type="GO" id="GO:0004822">
    <property type="term" value="F:isoleucine-tRNA ligase activity"/>
    <property type="evidence" value="ECO:0007669"/>
    <property type="project" value="UniProtKB-UniRule"/>
</dbReference>
<dbReference type="GO" id="GO:0000049">
    <property type="term" value="F:tRNA binding"/>
    <property type="evidence" value="ECO:0007669"/>
    <property type="project" value="InterPro"/>
</dbReference>
<dbReference type="GO" id="GO:0008270">
    <property type="term" value="F:zinc ion binding"/>
    <property type="evidence" value="ECO:0007669"/>
    <property type="project" value="UniProtKB-UniRule"/>
</dbReference>
<dbReference type="GO" id="GO:0006428">
    <property type="term" value="P:isoleucyl-tRNA aminoacylation"/>
    <property type="evidence" value="ECO:0007669"/>
    <property type="project" value="UniProtKB-UniRule"/>
</dbReference>
<dbReference type="CDD" id="cd07960">
    <property type="entry name" value="Anticodon_Ia_Ile_BEm"/>
    <property type="match status" value="1"/>
</dbReference>
<dbReference type="CDD" id="cd00818">
    <property type="entry name" value="IleRS_core"/>
    <property type="match status" value="1"/>
</dbReference>
<dbReference type="FunFam" id="1.10.730.20:FF:000001">
    <property type="entry name" value="Isoleucine--tRNA ligase"/>
    <property type="match status" value="1"/>
</dbReference>
<dbReference type="FunFam" id="3.40.50.620:FF:000152">
    <property type="entry name" value="Isoleucine--tRNA ligase"/>
    <property type="match status" value="1"/>
</dbReference>
<dbReference type="FunFam" id="3.40.50.620:FF:000128">
    <property type="entry name" value="Isoleucyl-tRNA synthetase 2, mitochondrial"/>
    <property type="match status" value="1"/>
</dbReference>
<dbReference type="Gene3D" id="1.10.730.20">
    <property type="match status" value="1"/>
</dbReference>
<dbReference type="Gene3D" id="3.40.50.620">
    <property type="entry name" value="HUPs"/>
    <property type="match status" value="2"/>
</dbReference>
<dbReference type="Gene3D" id="1.10.10.830">
    <property type="entry name" value="Ile-tRNA synthetase CP2 domain-like"/>
    <property type="match status" value="1"/>
</dbReference>
<dbReference type="HAMAP" id="MF_02002">
    <property type="entry name" value="Ile_tRNA_synth_type1"/>
    <property type="match status" value="1"/>
</dbReference>
<dbReference type="InterPro" id="IPR001412">
    <property type="entry name" value="aa-tRNA-synth_I_CS"/>
</dbReference>
<dbReference type="InterPro" id="IPR002300">
    <property type="entry name" value="aa-tRNA-synth_Ia"/>
</dbReference>
<dbReference type="InterPro" id="IPR033708">
    <property type="entry name" value="Anticodon_Ile_BEm"/>
</dbReference>
<dbReference type="InterPro" id="IPR002301">
    <property type="entry name" value="Ile-tRNA-ligase"/>
</dbReference>
<dbReference type="InterPro" id="IPR023585">
    <property type="entry name" value="Ile-tRNA-ligase_type1"/>
</dbReference>
<dbReference type="InterPro" id="IPR050081">
    <property type="entry name" value="Ile-tRNA_ligase"/>
</dbReference>
<dbReference type="InterPro" id="IPR013155">
    <property type="entry name" value="M/V/L/I-tRNA-synth_anticd-bd"/>
</dbReference>
<dbReference type="InterPro" id="IPR014729">
    <property type="entry name" value="Rossmann-like_a/b/a_fold"/>
</dbReference>
<dbReference type="InterPro" id="IPR009080">
    <property type="entry name" value="tRNAsynth_Ia_anticodon-bd"/>
</dbReference>
<dbReference type="InterPro" id="IPR009008">
    <property type="entry name" value="Val/Leu/Ile-tRNA-synth_edit"/>
</dbReference>
<dbReference type="InterPro" id="IPR010663">
    <property type="entry name" value="Znf_FPG/IleRS"/>
</dbReference>
<dbReference type="NCBIfam" id="TIGR00392">
    <property type="entry name" value="ileS"/>
    <property type="match status" value="1"/>
</dbReference>
<dbReference type="PANTHER" id="PTHR42765:SF1">
    <property type="entry name" value="ISOLEUCINE--TRNA LIGASE, MITOCHONDRIAL"/>
    <property type="match status" value="1"/>
</dbReference>
<dbReference type="PANTHER" id="PTHR42765">
    <property type="entry name" value="SOLEUCYL-TRNA SYNTHETASE"/>
    <property type="match status" value="1"/>
</dbReference>
<dbReference type="Pfam" id="PF08264">
    <property type="entry name" value="Anticodon_1"/>
    <property type="match status" value="1"/>
</dbReference>
<dbReference type="Pfam" id="PF00133">
    <property type="entry name" value="tRNA-synt_1"/>
    <property type="match status" value="1"/>
</dbReference>
<dbReference type="Pfam" id="PF06827">
    <property type="entry name" value="zf-FPG_IleRS"/>
    <property type="match status" value="1"/>
</dbReference>
<dbReference type="PRINTS" id="PR00984">
    <property type="entry name" value="TRNASYNTHILE"/>
</dbReference>
<dbReference type="SUPFAM" id="SSF47323">
    <property type="entry name" value="Anticodon-binding domain of a subclass of class I aminoacyl-tRNA synthetases"/>
    <property type="match status" value="1"/>
</dbReference>
<dbReference type="SUPFAM" id="SSF52374">
    <property type="entry name" value="Nucleotidylyl transferase"/>
    <property type="match status" value="1"/>
</dbReference>
<dbReference type="SUPFAM" id="SSF50677">
    <property type="entry name" value="ValRS/IleRS/LeuRS editing domain"/>
    <property type="match status" value="1"/>
</dbReference>
<dbReference type="PROSITE" id="PS00178">
    <property type="entry name" value="AA_TRNA_LIGASE_I"/>
    <property type="match status" value="1"/>
</dbReference>
<comment type="function">
    <text evidence="1">Catalyzes the attachment of isoleucine to tRNA(Ile). As IleRS can inadvertently accommodate and process structurally similar amino acids such as valine, to avoid such errors it has two additional distinct tRNA(Ile)-dependent editing activities. One activity is designated as 'pretransfer' editing and involves the hydrolysis of activated Val-AMP. The other activity is designated 'posttransfer' editing and involves deacylation of mischarged Val-tRNA(Ile).</text>
</comment>
<comment type="catalytic activity">
    <reaction evidence="1">
        <text>tRNA(Ile) + L-isoleucine + ATP = L-isoleucyl-tRNA(Ile) + AMP + diphosphate</text>
        <dbReference type="Rhea" id="RHEA:11060"/>
        <dbReference type="Rhea" id="RHEA-COMP:9666"/>
        <dbReference type="Rhea" id="RHEA-COMP:9695"/>
        <dbReference type="ChEBI" id="CHEBI:30616"/>
        <dbReference type="ChEBI" id="CHEBI:33019"/>
        <dbReference type="ChEBI" id="CHEBI:58045"/>
        <dbReference type="ChEBI" id="CHEBI:78442"/>
        <dbReference type="ChEBI" id="CHEBI:78528"/>
        <dbReference type="ChEBI" id="CHEBI:456215"/>
        <dbReference type="EC" id="6.1.1.5"/>
    </reaction>
</comment>
<comment type="cofactor">
    <cofactor evidence="1">
        <name>Zn(2+)</name>
        <dbReference type="ChEBI" id="CHEBI:29105"/>
    </cofactor>
    <text evidence="1">Binds 1 zinc ion per subunit.</text>
</comment>
<comment type="subunit">
    <text evidence="1">Monomer.</text>
</comment>
<comment type="subcellular location">
    <subcellularLocation>
        <location evidence="1">Cytoplasm</location>
    </subcellularLocation>
</comment>
<comment type="domain">
    <text evidence="1">IleRS has two distinct active sites: one for aminoacylation and one for editing. The misactivated valine is translocated from the active site to the editing site, which sterically excludes the correctly activated isoleucine. The single editing site contains two valyl binding pockets, one specific for each substrate (Val-AMP or Val-tRNA(Ile)).</text>
</comment>
<comment type="similarity">
    <text evidence="1">Belongs to the class-I aminoacyl-tRNA synthetase family. IleS type 1 subfamily.</text>
</comment>
<gene>
    <name evidence="1" type="primary">ileS</name>
    <name type="ordered locus">cce_4545</name>
</gene>
<keyword id="KW-0030">Aminoacyl-tRNA synthetase</keyword>
<keyword id="KW-0067">ATP-binding</keyword>
<keyword id="KW-0963">Cytoplasm</keyword>
<keyword id="KW-0436">Ligase</keyword>
<keyword id="KW-0479">Metal-binding</keyword>
<keyword id="KW-0547">Nucleotide-binding</keyword>
<keyword id="KW-0648">Protein biosynthesis</keyword>
<keyword id="KW-1185">Reference proteome</keyword>
<keyword id="KW-0862">Zinc</keyword>
<reference key="1">
    <citation type="journal article" date="2008" name="Proc. Natl. Acad. Sci. U.S.A.">
        <title>The genome of Cyanothece 51142, a unicellular diazotrophic cyanobacterium important in the marine nitrogen cycle.</title>
        <authorList>
            <person name="Welsh E.A."/>
            <person name="Liberton M."/>
            <person name="Stoeckel J."/>
            <person name="Loh T."/>
            <person name="Elvitigala T."/>
            <person name="Wang C."/>
            <person name="Wollam A."/>
            <person name="Fulton R.S."/>
            <person name="Clifton S.W."/>
            <person name="Jacobs J.M."/>
            <person name="Aurora R."/>
            <person name="Ghosh B.K."/>
            <person name="Sherman L.A."/>
            <person name="Smith R.D."/>
            <person name="Wilson R.K."/>
            <person name="Pakrasi H.B."/>
        </authorList>
    </citation>
    <scope>NUCLEOTIDE SEQUENCE [LARGE SCALE GENOMIC DNA]</scope>
    <source>
        <strain>ATCC 51142 / BH68</strain>
    </source>
</reference>
<evidence type="ECO:0000255" key="1">
    <source>
        <dbReference type="HAMAP-Rule" id="MF_02002"/>
    </source>
</evidence>
<accession>B1WVA3</accession>
<feature type="chain" id="PRO_1000189145" description="Isoleucine--tRNA ligase">
    <location>
        <begin position="1"/>
        <end position="959"/>
    </location>
</feature>
<feature type="short sequence motif" description="'HIGH' region">
    <location>
        <begin position="60"/>
        <end position="70"/>
    </location>
</feature>
<feature type="short sequence motif" description="'KMSKS' region">
    <location>
        <begin position="610"/>
        <end position="614"/>
    </location>
</feature>
<feature type="binding site" evidence="1">
    <location>
        <position position="569"/>
    </location>
    <ligand>
        <name>L-isoleucyl-5'-AMP</name>
        <dbReference type="ChEBI" id="CHEBI:178002"/>
    </ligand>
</feature>
<feature type="binding site" evidence="1">
    <location>
        <position position="613"/>
    </location>
    <ligand>
        <name>ATP</name>
        <dbReference type="ChEBI" id="CHEBI:30616"/>
    </ligand>
</feature>
<feature type="binding site" evidence="1">
    <location>
        <position position="928"/>
    </location>
    <ligand>
        <name>Zn(2+)</name>
        <dbReference type="ChEBI" id="CHEBI:29105"/>
    </ligand>
</feature>
<feature type="binding site" evidence="1">
    <location>
        <position position="931"/>
    </location>
    <ligand>
        <name>Zn(2+)</name>
        <dbReference type="ChEBI" id="CHEBI:29105"/>
    </ligand>
</feature>
<feature type="binding site" evidence="1">
    <location>
        <position position="948"/>
    </location>
    <ligand>
        <name>Zn(2+)</name>
        <dbReference type="ChEBI" id="CHEBI:29105"/>
    </ligand>
</feature>
<feature type="binding site" evidence="1">
    <location>
        <position position="951"/>
    </location>
    <ligand>
        <name>Zn(2+)</name>
        <dbReference type="ChEBI" id="CHEBI:29105"/>
    </ligand>
</feature>
<name>SYI_CROS5</name>